<sequence>MTSTSKLDANQLARQRKKLEKDRRKKVYDDQQVQGTNNSSIVSKRSVEKLYTQVLQPELGEWFQYFVPKGKRRSPAINRGYWIRMESIRQMVIRIIKANSPNVRINVVNLGCGFDPLAFQLLSLFKNQYNLNFIDIDYPDLVKNKYNMIQQSDEIKQLIGDQGSKSSDLYVMETDNYQLVGCDLKNLAYYKEILPKLVSRNVDPHPTSINIFIAEVSLAYMKPQFANPVIEISSQVNNSHFLILEQIMPDGATNAFATKMLYHFQHLRSPIQCVETYPTEKLQLQRFKRYYKHAEIKNLYGNWKFLIDYQMQKNISTIEEFDEWEEFIIFCQHYVIVHATHMDQLIYDDESSEEQKNEKAFSEMSLDSSVAISHDDRFNDEQLQLKFPAIASFKDKIYVNGGLKQTRNDENLEIDLQTGVITKLDQTENLPTARMCHTLTNLGENLVLIGGRSRPGVFFKDVYMFDTAKKWTRLADLPVGRSRHATVKISDHEVLIFGGLDASSSTTGDELFLLCNTNTNSYTPVKPIGDNDNHPIKNLQSACMIFDGKQGYIFGGMEDINVPIVNSKLYRFELVGENNISVTKVFDHSLLKRIGSKAHILENGDKLLIVGGVSPDQLFTKSTNIVTLDLNIFTFKSVEIPNVISEKVPPIFVGFELVQINNKASYIISGGAVCYSFGSCYNSVYKLEY</sequence>
<dbReference type="EC" id="2.1.1.290"/>
<dbReference type="EC" id="2.3.1.231"/>
<dbReference type="EMBL" id="CP017623">
    <property type="protein sequence ID" value="AOW25810.1"/>
    <property type="molecule type" value="Genomic_DNA"/>
</dbReference>
<dbReference type="RefSeq" id="XP_718126.1">
    <property type="nucleotide sequence ID" value="XM_713033.1"/>
</dbReference>
<dbReference type="SMR" id="Q5A931"/>
<dbReference type="FunCoup" id="Q5A931">
    <property type="interactions" value="116"/>
</dbReference>
<dbReference type="STRING" id="237561.Q5A931"/>
<dbReference type="EnsemblFungi" id="C1_01150C_A-T">
    <property type="protein sequence ID" value="C1_01150C_A-T-p1"/>
    <property type="gene ID" value="C1_01150C_A"/>
</dbReference>
<dbReference type="GeneID" id="3640203"/>
<dbReference type="KEGG" id="cal:CAALFM_C101150CA"/>
<dbReference type="CGD" id="CAL0000175964">
    <property type="gene designation" value="orf19.10813"/>
</dbReference>
<dbReference type="VEuPathDB" id="FungiDB:C1_01150C_A"/>
<dbReference type="eggNOG" id="KOG2918">
    <property type="taxonomic scope" value="Eukaryota"/>
</dbReference>
<dbReference type="HOGENOM" id="CLU_002761_0_0_1"/>
<dbReference type="InParanoid" id="Q5A931"/>
<dbReference type="OMA" id="FCILEQF"/>
<dbReference type="OrthoDB" id="47172at2759"/>
<dbReference type="UniPathway" id="UPA00375"/>
<dbReference type="PRO" id="PR:Q5A931"/>
<dbReference type="Proteomes" id="UP000000559">
    <property type="component" value="Chromosome 1"/>
</dbReference>
<dbReference type="GO" id="GO:0008175">
    <property type="term" value="F:tRNA methyltransferase activity"/>
    <property type="evidence" value="ECO:0000318"/>
    <property type="project" value="GO_Central"/>
</dbReference>
<dbReference type="GO" id="GO:0030488">
    <property type="term" value="P:tRNA methylation"/>
    <property type="evidence" value="ECO:0000318"/>
    <property type="project" value="GO_Central"/>
</dbReference>
<dbReference type="GO" id="GO:0031591">
    <property type="term" value="P:wybutosine biosynthetic process"/>
    <property type="evidence" value="ECO:0000318"/>
    <property type="project" value="GO_Central"/>
</dbReference>
<dbReference type="FunFam" id="3.40.50.150:FF:000882">
    <property type="entry name" value="tRNA wybutosine-synthesizing protein 4"/>
    <property type="match status" value="1"/>
</dbReference>
<dbReference type="Gene3D" id="2.120.10.80">
    <property type="entry name" value="Kelch-type beta propeller"/>
    <property type="match status" value="1"/>
</dbReference>
<dbReference type="Gene3D" id="3.40.50.150">
    <property type="entry name" value="Vaccinia Virus protein VP39"/>
    <property type="match status" value="1"/>
</dbReference>
<dbReference type="InterPro" id="IPR015915">
    <property type="entry name" value="Kelch-typ_b-propeller"/>
</dbReference>
<dbReference type="InterPro" id="IPR006652">
    <property type="entry name" value="Kelch_1"/>
</dbReference>
<dbReference type="InterPro" id="IPR007213">
    <property type="entry name" value="Ppm1/Ppm2/Tcmp"/>
</dbReference>
<dbReference type="InterPro" id="IPR029063">
    <property type="entry name" value="SAM-dependent_MTases_sf"/>
</dbReference>
<dbReference type="PANTHER" id="PTHR46529">
    <property type="entry name" value="TRNA WYBUTOSINE-SYNTHESIZING PROTEIN 4"/>
    <property type="match status" value="1"/>
</dbReference>
<dbReference type="PANTHER" id="PTHR46529:SF1">
    <property type="entry name" value="TRNA WYBUTOSINE-SYNTHESIZING PROTEIN 4"/>
    <property type="match status" value="1"/>
</dbReference>
<dbReference type="Pfam" id="PF24681">
    <property type="entry name" value="Kelch_KLHDC2_KLHL20_DRC7"/>
    <property type="match status" value="1"/>
</dbReference>
<dbReference type="Pfam" id="PF04072">
    <property type="entry name" value="LCM"/>
    <property type="match status" value="1"/>
</dbReference>
<dbReference type="SMART" id="SM00612">
    <property type="entry name" value="Kelch"/>
    <property type="match status" value="1"/>
</dbReference>
<dbReference type="SUPFAM" id="SSF117281">
    <property type="entry name" value="Kelch motif"/>
    <property type="match status" value="1"/>
</dbReference>
<dbReference type="SUPFAM" id="SSF53335">
    <property type="entry name" value="S-adenosyl-L-methionine-dependent methyltransferases"/>
    <property type="match status" value="1"/>
</dbReference>
<gene>
    <name type="primary">PPM2</name>
    <name type="synonym">TYW4</name>
    <name type="ordered locus">CAALFM_C101150CA</name>
    <name type="ORF">CaO19.10813</name>
    <name type="ORF">CaO19.3303</name>
</gene>
<name>TYW4_CANAL</name>
<feature type="chain" id="PRO_0000226139" description="tRNA wybutosine-synthesizing protein 4">
    <location>
        <begin position="1"/>
        <end position="689"/>
    </location>
</feature>
<feature type="region of interest" description="Disordered" evidence="2">
    <location>
        <begin position="1"/>
        <end position="33"/>
    </location>
</feature>
<feature type="compositionally biased region" description="Basic residues" evidence="2">
    <location>
        <begin position="14"/>
        <end position="26"/>
    </location>
</feature>
<feature type="binding site" evidence="1">
    <location>
        <position position="84"/>
    </location>
    <ligand>
        <name>S-adenosyl-L-methionine</name>
        <dbReference type="ChEBI" id="CHEBI:59789"/>
    </ligand>
</feature>
<feature type="binding site" evidence="1">
    <location>
        <position position="111"/>
    </location>
    <ligand>
        <name>S-adenosyl-L-methionine</name>
        <dbReference type="ChEBI" id="CHEBI:59789"/>
    </ligand>
</feature>
<feature type="binding site" evidence="1">
    <location>
        <position position="137"/>
    </location>
    <ligand>
        <name>S-adenosyl-L-methionine</name>
        <dbReference type="ChEBI" id="CHEBI:59789"/>
    </ligand>
</feature>
<feature type="binding site" evidence="1">
    <location>
        <begin position="183"/>
        <end position="184"/>
    </location>
    <ligand>
        <name>S-adenosyl-L-methionine</name>
        <dbReference type="ChEBI" id="CHEBI:59789"/>
    </ligand>
</feature>
<feature type="binding site" evidence="1">
    <location>
        <position position="215"/>
    </location>
    <ligand>
        <name>S-adenosyl-L-methionine</name>
        <dbReference type="ChEBI" id="CHEBI:59789"/>
    </ligand>
</feature>
<keyword id="KW-0489">Methyltransferase</keyword>
<keyword id="KW-1185">Reference proteome</keyword>
<keyword id="KW-0949">S-adenosyl-L-methionine</keyword>
<keyword id="KW-0808">Transferase</keyword>
<keyword id="KW-0819">tRNA processing</keyword>
<organism>
    <name type="scientific">Candida albicans (strain SC5314 / ATCC MYA-2876)</name>
    <name type="common">Yeast</name>
    <dbReference type="NCBI Taxonomy" id="237561"/>
    <lineage>
        <taxon>Eukaryota</taxon>
        <taxon>Fungi</taxon>
        <taxon>Dikarya</taxon>
        <taxon>Ascomycota</taxon>
        <taxon>Saccharomycotina</taxon>
        <taxon>Pichiomycetes</taxon>
        <taxon>Debaryomycetaceae</taxon>
        <taxon>Candida/Lodderomyces clade</taxon>
        <taxon>Candida</taxon>
    </lineage>
</organism>
<protein>
    <recommendedName>
        <fullName>tRNA wybutosine-synthesizing protein 4</fullName>
        <shortName>tRNA-yW synthesizing protein 4</shortName>
        <ecNumber>2.1.1.290</ecNumber>
        <ecNumber>2.3.1.231</ecNumber>
    </recommendedName>
    <alternativeName>
        <fullName>Leucine carboxyl methyltransferase 2</fullName>
    </alternativeName>
    <alternativeName>
        <fullName>tRNA(Phe) (7-(3-amino-3-(methoxycarbonyl)propyl)wyosine(37)-N)-methoxycarbonyltransferase</fullName>
    </alternativeName>
    <alternativeName>
        <fullName>tRNA(Phe) (7-(3-amino-3-carboxypropyl)wyosine(37)-O)-methyltransferase</fullName>
    </alternativeName>
</protein>
<proteinExistence type="inferred from homology"/>
<evidence type="ECO:0000250" key="1"/>
<evidence type="ECO:0000256" key="2">
    <source>
        <dbReference type="SAM" id="MobiDB-lite"/>
    </source>
</evidence>
<evidence type="ECO:0000305" key="3"/>
<accession>Q5A931</accession>
<accession>A0A1D8PCE0</accession>
<reference key="1">
    <citation type="journal article" date="2004" name="Proc. Natl. Acad. Sci. U.S.A.">
        <title>The diploid genome sequence of Candida albicans.</title>
        <authorList>
            <person name="Jones T."/>
            <person name="Federspiel N.A."/>
            <person name="Chibana H."/>
            <person name="Dungan J."/>
            <person name="Kalman S."/>
            <person name="Magee B.B."/>
            <person name="Newport G."/>
            <person name="Thorstenson Y.R."/>
            <person name="Agabian N."/>
            <person name="Magee P.T."/>
            <person name="Davis R.W."/>
            <person name="Scherer S."/>
        </authorList>
    </citation>
    <scope>NUCLEOTIDE SEQUENCE [LARGE SCALE GENOMIC DNA]</scope>
    <source>
        <strain>SC5314 / ATCC MYA-2876</strain>
    </source>
</reference>
<reference key="2">
    <citation type="journal article" date="2007" name="Genome Biol.">
        <title>Assembly of the Candida albicans genome into sixteen supercontigs aligned on the eight chromosomes.</title>
        <authorList>
            <person name="van het Hoog M."/>
            <person name="Rast T.J."/>
            <person name="Martchenko M."/>
            <person name="Grindle S."/>
            <person name="Dignard D."/>
            <person name="Hogues H."/>
            <person name="Cuomo C."/>
            <person name="Berriman M."/>
            <person name="Scherer S."/>
            <person name="Magee B.B."/>
            <person name="Whiteway M."/>
            <person name="Chibana H."/>
            <person name="Nantel A."/>
            <person name="Magee P.T."/>
        </authorList>
    </citation>
    <scope>GENOME REANNOTATION</scope>
    <source>
        <strain>SC5314 / ATCC MYA-2876</strain>
    </source>
</reference>
<reference key="3">
    <citation type="journal article" date="2013" name="Genome Biol.">
        <title>Assembly of a phased diploid Candida albicans genome facilitates allele-specific measurements and provides a simple model for repeat and indel structure.</title>
        <authorList>
            <person name="Muzzey D."/>
            <person name="Schwartz K."/>
            <person name="Weissman J.S."/>
            <person name="Sherlock G."/>
        </authorList>
    </citation>
    <scope>NUCLEOTIDE SEQUENCE [LARGE SCALE GENOMIC DNA]</scope>
    <scope>GENOME REANNOTATION</scope>
    <source>
        <strain>SC5314 / ATCC MYA-2876</strain>
    </source>
</reference>
<comment type="function">
    <text evidence="1">Probable S-adenosyl-L-methionine-dependent methyltransferase that acts as a component of the wybutosine biosynthesis pathway. Wybutosine is a hyper modified guanosine with a tricyclic base found at the 3'-position adjacent to the anticodon of eukaryotic phenylalanine tRNA. May methylate the carboxyl group of leucine residues to form alpha-leucine ester residues (By similarity).</text>
</comment>
<comment type="catalytic activity">
    <reaction>
        <text>7-[(3S)-3-amino-3-carboxypropyl]wyosine(37) in tRNA(Phe) + S-adenosyl-L-methionine = 7-[(3S)-(3-amino-3-methoxycarbonyl)propyl]wyosine(37) in tRNA(Phe) + S-adenosyl-L-homocysteine</text>
        <dbReference type="Rhea" id="RHEA:36903"/>
        <dbReference type="Rhea" id="RHEA-COMP:10379"/>
        <dbReference type="Rhea" id="RHEA-COMP:11844"/>
        <dbReference type="ChEBI" id="CHEBI:57856"/>
        <dbReference type="ChEBI" id="CHEBI:59789"/>
        <dbReference type="ChEBI" id="CHEBI:73543"/>
        <dbReference type="ChEBI" id="CHEBI:74275"/>
        <dbReference type="EC" id="2.1.1.290"/>
    </reaction>
</comment>
<comment type="catalytic activity">
    <reaction>
        <text>7-[(3S)-(3-amino-3-methoxycarbonyl)propyl]wyosine(37) in tRNA(Phe) + S-adenosyl-L-methionine + CO2 = wybutosine(37) in tRNA(Phe) + S-adenosyl-L-homocysteine + 2 H(+)</text>
        <dbReference type="Rhea" id="RHEA:37119"/>
        <dbReference type="Rhea" id="RHEA-COMP:11844"/>
        <dbReference type="Rhea" id="RHEA-COMP:11847"/>
        <dbReference type="ChEBI" id="CHEBI:15378"/>
        <dbReference type="ChEBI" id="CHEBI:16526"/>
        <dbReference type="ChEBI" id="CHEBI:57856"/>
        <dbReference type="ChEBI" id="CHEBI:59789"/>
        <dbReference type="ChEBI" id="CHEBI:73544"/>
        <dbReference type="ChEBI" id="CHEBI:74275"/>
        <dbReference type="EC" id="2.3.1.231"/>
    </reaction>
</comment>
<comment type="pathway">
    <text>tRNA modification; wybutosine-tRNA(Phe) biosynthesis.</text>
</comment>
<comment type="similarity">
    <text evidence="3">Belongs to the methyltransferase superfamily. LCMT family.</text>
</comment>